<gene>
    <name evidence="1" type="primary">ligA</name>
    <name type="ordered locus">Pmob_0996</name>
</gene>
<organism>
    <name type="scientific">Petrotoga mobilis (strain DSM 10674 / SJ95)</name>
    <dbReference type="NCBI Taxonomy" id="403833"/>
    <lineage>
        <taxon>Bacteria</taxon>
        <taxon>Thermotogati</taxon>
        <taxon>Thermotogota</taxon>
        <taxon>Thermotogae</taxon>
        <taxon>Petrotogales</taxon>
        <taxon>Petrotogaceae</taxon>
        <taxon>Petrotoga</taxon>
    </lineage>
</organism>
<keyword id="KW-0227">DNA damage</keyword>
<keyword id="KW-0234">DNA repair</keyword>
<keyword id="KW-0235">DNA replication</keyword>
<keyword id="KW-0436">Ligase</keyword>
<keyword id="KW-0460">Magnesium</keyword>
<keyword id="KW-0464">Manganese</keyword>
<keyword id="KW-0479">Metal-binding</keyword>
<keyword id="KW-0520">NAD</keyword>
<keyword id="KW-0862">Zinc</keyword>
<sequence length="668" mass="75882">MDIPKNIKERYEKLKAEIEEHNYRYYVLADPIISDQEYDKLFKELVELEKKYPELKTPDSPTQRIGGIVVEGFNKVNHLIPMLSLDNTYNEEEILDFHKRVLKNLSLNHVEYFCELKIDGVSVALRYTDGVLTQAITRGDGTTGEDITQNVKTIPSIPLRLRENLTIEVRGEIYMPKKEFVRINSEREEKGLPVFANPRNATAGTLKLLDSTEVAKRKLSSFMYYVIFPQNYNLETQEEAINFLKEVGFRINPNYKNAQDIGQVIEFWKEWNRRRKELEYEVDGIVVKVNSFELQRLLGETARSPRWAIAFKFEAEQKETKLKAIKLQVGSTGIITPVAEFDPIQLEGTIVKRASLHNFDYLKERDIREGDYVLIEKAGGIIPQVIGPVKEKRTGEEKIIRPPEKCPVCGGKVGKIKSSEVAIRCLNPSCPEKLLRTLENFVSRNAMNIQGLGPKILKRMVDAGLLKDIADLYYLNEQKIRSLGEGIGDKTVENILTQIEQSKNRELDRLINALGIPNVGSKTAKDLANHFKNLDSLIDAKFDELVEIEGIGEDIANAIIKFFSQEEVKKIVKKLKDAGVNMGKKEEEKLEGPLKGLVICQTGALSKMTRQEFAEYVESKGGTFSENVTKKTNILVVGENPGSKLDKAQSYGITIMSEEEFFDKYGES</sequence>
<protein>
    <recommendedName>
        <fullName evidence="1">DNA ligase</fullName>
        <ecNumber evidence="1">6.5.1.2</ecNumber>
    </recommendedName>
    <alternativeName>
        <fullName evidence="1">Polydeoxyribonucleotide synthase [NAD(+)]</fullName>
    </alternativeName>
</protein>
<evidence type="ECO:0000255" key="1">
    <source>
        <dbReference type="HAMAP-Rule" id="MF_01588"/>
    </source>
</evidence>
<accession>A9BJX5</accession>
<name>DNLJ_PETMO</name>
<dbReference type="EC" id="6.5.1.2" evidence="1"/>
<dbReference type="EMBL" id="CP000879">
    <property type="protein sequence ID" value="ABX31718.1"/>
    <property type="molecule type" value="Genomic_DNA"/>
</dbReference>
<dbReference type="RefSeq" id="WP_012208821.1">
    <property type="nucleotide sequence ID" value="NC_010003.1"/>
</dbReference>
<dbReference type="SMR" id="A9BJX5"/>
<dbReference type="STRING" id="403833.Pmob_0996"/>
<dbReference type="KEGG" id="pmo:Pmob_0996"/>
<dbReference type="eggNOG" id="COG0272">
    <property type="taxonomic scope" value="Bacteria"/>
</dbReference>
<dbReference type="HOGENOM" id="CLU_007764_2_1_0"/>
<dbReference type="OrthoDB" id="9759736at2"/>
<dbReference type="Proteomes" id="UP000000789">
    <property type="component" value="Chromosome"/>
</dbReference>
<dbReference type="GO" id="GO:0005829">
    <property type="term" value="C:cytosol"/>
    <property type="evidence" value="ECO:0007669"/>
    <property type="project" value="TreeGrafter"/>
</dbReference>
<dbReference type="GO" id="GO:0003677">
    <property type="term" value="F:DNA binding"/>
    <property type="evidence" value="ECO:0007669"/>
    <property type="project" value="InterPro"/>
</dbReference>
<dbReference type="GO" id="GO:0003911">
    <property type="term" value="F:DNA ligase (NAD+) activity"/>
    <property type="evidence" value="ECO:0007669"/>
    <property type="project" value="UniProtKB-UniRule"/>
</dbReference>
<dbReference type="GO" id="GO:0046872">
    <property type="term" value="F:metal ion binding"/>
    <property type="evidence" value="ECO:0007669"/>
    <property type="project" value="UniProtKB-KW"/>
</dbReference>
<dbReference type="GO" id="GO:0006281">
    <property type="term" value="P:DNA repair"/>
    <property type="evidence" value="ECO:0007669"/>
    <property type="project" value="UniProtKB-KW"/>
</dbReference>
<dbReference type="GO" id="GO:0006260">
    <property type="term" value="P:DNA replication"/>
    <property type="evidence" value="ECO:0007669"/>
    <property type="project" value="UniProtKB-KW"/>
</dbReference>
<dbReference type="CDD" id="cd17748">
    <property type="entry name" value="BRCT_DNA_ligase_like"/>
    <property type="match status" value="1"/>
</dbReference>
<dbReference type="CDD" id="cd00114">
    <property type="entry name" value="LIGANc"/>
    <property type="match status" value="1"/>
</dbReference>
<dbReference type="FunFam" id="1.10.150.20:FF:000006">
    <property type="entry name" value="DNA ligase"/>
    <property type="match status" value="1"/>
</dbReference>
<dbReference type="FunFam" id="1.10.150.20:FF:000007">
    <property type="entry name" value="DNA ligase"/>
    <property type="match status" value="1"/>
</dbReference>
<dbReference type="FunFam" id="1.10.287.610:FF:000002">
    <property type="entry name" value="DNA ligase"/>
    <property type="match status" value="1"/>
</dbReference>
<dbReference type="FunFam" id="3.30.470.30:FF:000001">
    <property type="entry name" value="DNA ligase"/>
    <property type="match status" value="1"/>
</dbReference>
<dbReference type="Gene3D" id="6.20.10.30">
    <property type="match status" value="1"/>
</dbReference>
<dbReference type="Gene3D" id="1.10.150.20">
    <property type="entry name" value="5' to 3' exonuclease, C-terminal subdomain"/>
    <property type="match status" value="2"/>
</dbReference>
<dbReference type="Gene3D" id="3.40.50.10190">
    <property type="entry name" value="BRCT domain"/>
    <property type="match status" value="1"/>
</dbReference>
<dbReference type="Gene3D" id="3.30.470.30">
    <property type="entry name" value="DNA ligase/mRNA capping enzyme"/>
    <property type="match status" value="1"/>
</dbReference>
<dbReference type="Gene3D" id="1.10.287.610">
    <property type="entry name" value="Helix hairpin bin"/>
    <property type="match status" value="1"/>
</dbReference>
<dbReference type="Gene3D" id="2.40.50.140">
    <property type="entry name" value="Nucleic acid-binding proteins"/>
    <property type="match status" value="1"/>
</dbReference>
<dbReference type="HAMAP" id="MF_01588">
    <property type="entry name" value="DNA_ligase_A"/>
    <property type="match status" value="1"/>
</dbReference>
<dbReference type="InterPro" id="IPR001357">
    <property type="entry name" value="BRCT_dom"/>
</dbReference>
<dbReference type="InterPro" id="IPR036420">
    <property type="entry name" value="BRCT_dom_sf"/>
</dbReference>
<dbReference type="InterPro" id="IPR041663">
    <property type="entry name" value="DisA/LigA_HHH"/>
</dbReference>
<dbReference type="InterPro" id="IPR001679">
    <property type="entry name" value="DNA_ligase"/>
</dbReference>
<dbReference type="InterPro" id="IPR018239">
    <property type="entry name" value="DNA_ligase_AS"/>
</dbReference>
<dbReference type="InterPro" id="IPR013839">
    <property type="entry name" value="DNAligase_adenylation"/>
</dbReference>
<dbReference type="InterPro" id="IPR013840">
    <property type="entry name" value="DNAligase_N"/>
</dbReference>
<dbReference type="InterPro" id="IPR003583">
    <property type="entry name" value="Hlx-hairpin-Hlx_DNA-bd_motif"/>
</dbReference>
<dbReference type="InterPro" id="IPR012340">
    <property type="entry name" value="NA-bd_OB-fold"/>
</dbReference>
<dbReference type="InterPro" id="IPR004150">
    <property type="entry name" value="NAD_DNA_ligase_OB"/>
</dbReference>
<dbReference type="InterPro" id="IPR010994">
    <property type="entry name" value="RuvA_2-like"/>
</dbReference>
<dbReference type="InterPro" id="IPR004149">
    <property type="entry name" value="Znf_DNAligase_C4"/>
</dbReference>
<dbReference type="NCBIfam" id="TIGR00575">
    <property type="entry name" value="dnlj"/>
    <property type="match status" value="1"/>
</dbReference>
<dbReference type="NCBIfam" id="NF005932">
    <property type="entry name" value="PRK07956.1"/>
    <property type="match status" value="1"/>
</dbReference>
<dbReference type="PANTHER" id="PTHR23389">
    <property type="entry name" value="CHROMOSOME TRANSMISSION FIDELITY FACTOR 18"/>
    <property type="match status" value="1"/>
</dbReference>
<dbReference type="PANTHER" id="PTHR23389:SF9">
    <property type="entry name" value="DNA LIGASE"/>
    <property type="match status" value="1"/>
</dbReference>
<dbReference type="Pfam" id="PF00533">
    <property type="entry name" value="BRCT"/>
    <property type="match status" value="1"/>
</dbReference>
<dbReference type="Pfam" id="PF01653">
    <property type="entry name" value="DNA_ligase_aden"/>
    <property type="match status" value="1"/>
</dbReference>
<dbReference type="Pfam" id="PF03120">
    <property type="entry name" value="DNA_ligase_OB"/>
    <property type="match status" value="1"/>
</dbReference>
<dbReference type="Pfam" id="PF03119">
    <property type="entry name" value="DNA_ligase_ZBD"/>
    <property type="match status" value="1"/>
</dbReference>
<dbReference type="Pfam" id="PF12826">
    <property type="entry name" value="HHH_2"/>
    <property type="match status" value="1"/>
</dbReference>
<dbReference type="Pfam" id="PF14520">
    <property type="entry name" value="HHH_5"/>
    <property type="match status" value="1"/>
</dbReference>
<dbReference type="Pfam" id="PF22745">
    <property type="entry name" value="Nlig-Ia"/>
    <property type="match status" value="1"/>
</dbReference>
<dbReference type="PIRSF" id="PIRSF001604">
    <property type="entry name" value="LigA"/>
    <property type="match status" value="1"/>
</dbReference>
<dbReference type="SMART" id="SM00292">
    <property type="entry name" value="BRCT"/>
    <property type="match status" value="1"/>
</dbReference>
<dbReference type="SMART" id="SM00278">
    <property type="entry name" value="HhH1"/>
    <property type="match status" value="3"/>
</dbReference>
<dbReference type="SMART" id="SM00532">
    <property type="entry name" value="LIGANc"/>
    <property type="match status" value="1"/>
</dbReference>
<dbReference type="SUPFAM" id="SSF52113">
    <property type="entry name" value="BRCT domain"/>
    <property type="match status" value="1"/>
</dbReference>
<dbReference type="SUPFAM" id="SSF56091">
    <property type="entry name" value="DNA ligase/mRNA capping enzyme, catalytic domain"/>
    <property type="match status" value="1"/>
</dbReference>
<dbReference type="SUPFAM" id="SSF50249">
    <property type="entry name" value="Nucleic acid-binding proteins"/>
    <property type="match status" value="1"/>
</dbReference>
<dbReference type="SUPFAM" id="SSF47781">
    <property type="entry name" value="RuvA domain 2-like"/>
    <property type="match status" value="1"/>
</dbReference>
<dbReference type="PROSITE" id="PS50172">
    <property type="entry name" value="BRCT"/>
    <property type="match status" value="1"/>
</dbReference>
<dbReference type="PROSITE" id="PS01055">
    <property type="entry name" value="DNA_LIGASE_N1"/>
    <property type="match status" value="1"/>
</dbReference>
<reference key="1">
    <citation type="submission" date="2007-11" db="EMBL/GenBank/DDBJ databases">
        <title>Complete sequence of Petroga mobilis SJ95.</title>
        <authorList>
            <consortium name="US DOE Joint Genome Institute"/>
            <person name="Copeland A."/>
            <person name="Lucas S."/>
            <person name="Lapidus A."/>
            <person name="Barry K."/>
            <person name="Glavina del Rio T."/>
            <person name="Dalin E."/>
            <person name="Tice H."/>
            <person name="Pitluck S."/>
            <person name="Meincke L."/>
            <person name="Brettin T."/>
            <person name="Bruce D."/>
            <person name="Detter J.C."/>
            <person name="Han C."/>
            <person name="Kuske C.R."/>
            <person name="Schmutz J."/>
            <person name="Larimer F."/>
            <person name="Land M."/>
            <person name="Hauser L."/>
            <person name="Kyrpides N."/>
            <person name="Mikhailova N."/>
            <person name="Noll K."/>
            <person name="Richardson P."/>
        </authorList>
    </citation>
    <scope>NUCLEOTIDE SEQUENCE [LARGE SCALE GENOMIC DNA]</scope>
    <source>
        <strain>DSM 10674 / SJ95</strain>
    </source>
</reference>
<feature type="chain" id="PRO_0000340364" description="DNA ligase">
    <location>
        <begin position="1"/>
        <end position="668"/>
    </location>
</feature>
<feature type="domain" description="BRCT" evidence="1">
    <location>
        <begin position="589"/>
        <end position="668"/>
    </location>
</feature>
<feature type="active site" description="N6-AMP-lysine intermediate" evidence="1">
    <location>
        <position position="117"/>
    </location>
</feature>
<feature type="binding site" evidence="1">
    <location>
        <begin position="35"/>
        <end position="39"/>
    </location>
    <ligand>
        <name>NAD(+)</name>
        <dbReference type="ChEBI" id="CHEBI:57540"/>
    </ligand>
</feature>
<feature type="binding site" evidence="1">
    <location>
        <begin position="84"/>
        <end position="85"/>
    </location>
    <ligand>
        <name>NAD(+)</name>
        <dbReference type="ChEBI" id="CHEBI:57540"/>
    </ligand>
</feature>
<feature type="binding site" evidence="1">
    <location>
        <position position="115"/>
    </location>
    <ligand>
        <name>NAD(+)</name>
        <dbReference type="ChEBI" id="CHEBI:57540"/>
    </ligand>
</feature>
<feature type="binding site" evidence="1">
    <location>
        <position position="138"/>
    </location>
    <ligand>
        <name>NAD(+)</name>
        <dbReference type="ChEBI" id="CHEBI:57540"/>
    </ligand>
</feature>
<feature type="binding site" evidence="1">
    <location>
        <position position="172"/>
    </location>
    <ligand>
        <name>NAD(+)</name>
        <dbReference type="ChEBI" id="CHEBI:57540"/>
    </ligand>
</feature>
<feature type="binding site" evidence="1">
    <location>
        <position position="288"/>
    </location>
    <ligand>
        <name>NAD(+)</name>
        <dbReference type="ChEBI" id="CHEBI:57540"/>
    </ligand>
</feature>
<feature type="binding site" evidence="1">
    <location>
        <position position="312"/>
    </location>
    <ligand>
        <name>NAD(+)</name>
        <dbReference type="ChEBI" id="CHEBI:57540"/>
    </ligand>
</feature>
<feature type="binding site" evidence="1">
    <location>
        <position position="406"/>
    </location>
    <ligand>
        <name>Zn(2+)</name>
        <dbReference type="ChEBI" id="CHEBI:29105"/>
    </ligand>
</feature>
<feature type="binding site" evidence="1">
    <location>
        <position position="409"/>
    </location>
    <ligand>
        <name>Zn(2+)</name>
        <dbReference type="ChEBI" id="CHEBI:29105"/>
    </ligand>
</feature>
<feature type="binding site" evidence="1">
    <location>
        <position position="425"/>
    </location>
    <ligand>
        <name>Zn(2+)</name>
        <dbReference type="ChEBI" id="CHEBI:29105"/>
    </ligand>
</feature>
<feature type="binding site" evidence="1">
    <location>
        <position position="430"/>
    </location>
    <ligand>
        <name>Zn(2+)</name>
        <dbReference type="ChEBI" id="CHEBI:29105"/>
    </ligand>
</feature>
<comment type="function">
    <text evidence="1">DNA ligase that catalyzes the formation of phosphodiester linkages between 5'-phosphoryl and 3'-hydroxyl groups in double-stranded DNA using NAD as a coenzyme and as the energy source for the reaction. It is essential for DNA replication and repair of damaged DNA.</text>
</comment>
<comment type="catalytic activity">
    <reaction evidence="1">
        <text>NAD(+) + (deoxyribonucleotide)n-3'-hydroxyl + 5'-phospho-(deoxyribonucleotide)m = (deoxyribonucleotide)n+m + AMP + beta-nicotinamide D-nucleotide.</text>
        <dbReference type="EC" id="6.5.1.2"/>
    </reaction>
</comment>
<comment type="cofactor">
    <cofactor evidence="1">
        <name>Mg(2+)</name>
        <dbReference type="ChEBI" id="CHEBI:18420"/>
    </cofactor>
    <cofactor evidence="1">
        <name>Mn(2+)</name>
        <dbReference type="ChEBI" id="CHEBI:29035"/>
    </cofactor>
</comment>
<comment type="similarity">
    <text evidence="1">Belongs to the NAD-dependent DNA ligase family. LigA subfamily.</text>
</comment>
<proteinExistence type="inferred from homology"/>